<dbReference type="EC" id="2.1.1.-" evidence="1"/>
<dbReference type="EMBL" id="CP000020">
    <property type="protein sequence ID" value="AAW86883.1"/>
    <property type="molecule type" value="Genomic_DNA"/>
</dbReference>
<dbReference type="RefSeq" id="WP_005421283.1">
    <property type="nucleotide sequence ID" value="NZ_CAWLES010000001.1"/>
</dbReference>
<dbReference type="RefSeq" id="YP_205771.1">
    <property type="nucleotide sequence ID" value="NC_006840.2"/>
</dbReference>
<dbReference type="SMR" id="Q5E263"/>
<dbReference type="STRING" id="312309.VF_2388"/>
<dbReference type="EnsemblBacteria" id="AAW86883">
    <property type="protein sequence ID" value="AAW86883"/>
    <property type="gene ID" value="VF_2388"/>
</dbReference>
<dbReference type="GeneID" id="54165106"/>
<dbReference type="KEGG" id="vfi:VF_2388"/>
<dbReference type="PATRIC" id="fig|312309.11.peg.2424"/>
<dbReference type="eggNOG" id="COG2264">
    <property type="taxonomic scope" value="Bacteria"/>
</dbReference>
<dbReference type="HOGENOM" id="CLU_049382_4_1_6"/>
<dbReference type="OrthoDB" id="9785995at2"/>
<dbReference type="Proteomes" id="UP000000537">
    <property type="component" value="Chromosome I"/>
</dbReference>
<dbReference type="GO" id="GO:0005829">
    <property type="term" value="C:cytosol"/>
    <property type="evidence" value="ECO:0007669"/>
    <property type="project" value="TreeGrafter"/>
</dbReference>
<dbReference type="GO" id="GO:0016279">
    <property type="term" value="F:protein-lysine N-methyltransferase activity"/>
    <property type="evidence" value="ECO:0007669"/>
    <property type="project" value="TreeGrafter"/>
</dbReference>
<dbReference type="GO" id="GO:0032259">
    <property type="term" value="P:methylation"/>
    <property type="evidence" value="ECO:0007669"/>
    <property type="project" value="UniProtKB-KW"/>
</dbReference>
<dbReference type="CDD" id="cd02440">
    <property type="entry name" value="AdoMet_MTases"/>
    <property type="match status" value="1"/>
</dbReference>
<dbReference type="Gene3D" id="3.40.50.150">
    <property type="entry name" value="Vaccinia Virus protein VP39"/>
    <property type="match status" value="1"/>
</dbReference>
<dbReference type="HAMAP" id="MF_00735">
    <property type="entry name" value="Methyltr_PrmA"/>
    <property type="match status" value="1"/>
</dbReference>
<dbReference type="InterPro" id="IPR050078">
    <property type="entry name" value="Ribosomal_L11_MeTrfase_PrmA"/>
</dbReference>
<dbReference type="InterPro" id="IPR004498">
    <property type="entry name" value="Ribosomal_PrmA_MeTrfase"/>
</dbReference>
<dbReference type="InterPro" id="IPR029063">
    <property type="entry name" value="SAM-dependent_MTases_sf"/>
</dbReference>
<dbReference type="NCBIfam" id="TIGR00406">
    <property type="entry name" value="prmA"/>
    <property type="match status" value="1"/>
</dbReference>
<dbReference type="PANTHER" id="PTHR43648">
    <property type="entry name" value="ELECTRON TRANSFER FLAVOPROTEIN BETA SUBUNIT LYSINE METHYLTRANSFERASE"/>
    <property type="match status" value="1"/>
</dbReference>
<dbReference type="PANTHER" id="PTHR43648:SF1">
    <property type="entry name" value="ELECTRON TRANSFER FLAVOPROTEIN BETA SUBUNIT LYSINE METHYLTRANSFERASE"/>
    <property type="match status" value="1"/>
</dbReference>
<dbReference type="Pfam" id="PF06325">
    <property type="entry name" value="PrmA"/>
    <property type="match status" value="1"/>
</dbReference>
<dbReference type="PIRSF" id="PIRSF000401">
    <property type="entry name" value="RPL11_MTase"/>
    <property type="match status" value="1"/>
</dbReference>
<dbReference type="SUPFAM" id="SSF53335">
    <property type="entry name" value="S-adenosyl-L-methionine-dependent methyltransferases"/>
    <property type="match status" value="1"/>
</dbReference>
<organism>
    <name type="scientific">Aliivibrio fischeri (strain ATCC 700601 / ES114)</name>
    <name type="common">Vibrio fischeri</name>
    <dbReference type="NCBI Taxonomy" id="312309"/>
    <lineage>
        <taxon>Bacteria</taxon>
        <taxon>Pseudomonadati</taxon>
        <taxon>Pseudomonadota</taxon>
        <taxon>Gammaproteobacteria</taxon>
        <taxon>Vibrionales</taxon>
        <taxon>Vibrionaceae</taxon>
        <taxon>Aliivibrio</taxon>
    </lineage>
</organism>
<evidence type="ECO:0000255" key="1">
    <source>
        <dbReference type="HAMAP-Rule" id="MF_00735"/>
    </source>
</evidence>
<reference key="1">
    <citation type="journal article" date="2005" name="Proc. Natl. Acad. Sci. U.S.A.">
        <title>Complete genome sequence of Vibrio fischeri: a symbiotic bacterium with pathogenic congeners.</title>
        <authorList>
            <person name="Ruby E.G."/>
            <person name="Urbanowski M."/>
            <person name="Campbell J."/>
            <person name="Dunn A."/>
            <person name="Faini M."/>
            <person name="Gunsalus R."/>
            <person name="Lostroh P."/>
            <person name="Lupp C."/>
            <person name="McCann J."/>
            <person name="Millikan D."/>
            <person name="Schaefer A."/>
            <person name="Stabb E."/>
            <person name="Stevens A."/>
            <person name="Visick K."/>
            <person name="Whistler C."/>
            <person name="Greenberg E.P."/>
        </authorList>
    </citation>
    <scope>NUCLEOTIDE SEQUENCE [LARGE SCALE GENOMIC DNA]</scope>
    <source>
        <strain>ATCC 700601 / ES114</strain>
    </source>
</reference>
<feature type="chain" id="PRO_1000046120" description="Ribosomal protein L11 methyltransferase">
    <location>
        <begin position="1"/>
        <end position="294"/>
    </location>
</feature>
<feature type="binding site" evidence="1">
    <location>
        <position position="146"/>
    </location>
    <ligand>
        <name>S-adenosyl-L-methionine</name>
        <dbReference type="ChEBI" id="CHEBI:59789"/>
    </ligand>
</feature>
<feature type="binding site" evidence="1">
    <location>
        <position position="167"/>
    </location>
    <ligand>
        <name>S-adenosyl-L-methionine</name>
        <dbReference type="ChEBI" id="CHEBI:59789"/>
    </ligand>
</feature>
<feature type="binding site" evidence="1">
    <location>
        <position position="189"/>
    </location>
    <ligand>
        <name>S-adenosyl-L-methionine</name>
        <dbReference type="ChEBI" id="CHEBI:59789"/>
    </ligand>
</feature>
<feature type="binding site" evidence="1">
    <location>
        <position position="231"/>
    </location>
    <ligand>
        <name>S-adenosyl-L-methionine</name>
        <dbReference type="ChEBI" id="CHEBI:59789"/>
    </ligand>
</feature>
<keyword id="KW-0963">Cytoplasm</keyword>
<keyword id="KW-0489">Methyltransferase</keyword>
<keyword id="KW-1185">Reference proteome</keyword>
<keyword id="KW-0949">S-adenosyl-L-methionine</keyword>
<keyword id="KW-0808">Transferase</keyword>
<name>PRMA_ALIF1</name>
<comment type="function">
    <text evidence="1">Methylates ribosomal protein L11.</text>
</comment>
<comment type="catalytic activity">
    <reaction evidence="1">
        <text>L-lysyl-[protein] + 3 S-adenosyl-L-methionine = N(6),N(6),N(6)-trimethyl-L-lysyl-[protein] + 3 S-adenosyl-L-homocysteine + 3 H(+)</text>
        <dbReference type="Rhea" id="RHEA:54192"/>
        <dbReference type="Rhea" id="RHEA-COMP:9752"/>
        <dbReference type="Rhea" id="RHEA-COMP:13826"/>
        <dbReference type="ChEBI" id="CHEBI:15378"/>
        <dbReference type="ChEBI" id="CHEBI:29969"/>
        <dbReference type="ChEBI" id="CHEBI:57856"/>
        <dbReference type="ChEBI" id="CHEBI:59789"/>
        <dbReference type="ChEBI" id="CHEBI:61961"/>
    </reaction>
</comment>
<comment type="subcellular location">
    <subcellularLocation>
        <location evidence="1">Cytoplasm</location>
    </subcellularLocation>
</comment>
<comment type="similarity">
    <text evidence="1">Belongs to the methyltransferase superfamily. PrmA family.</text>
</comment>
<sequence length="294" mass="32373">MPWIQVKLNATSENAEQIGDMLMEETGALSITFLDAKDTPVFEPLPGETRLWGETDILALYDAEADMDFVITQLKASRLLEEGFAHKIEQLEDKDWEREWMDNFHPMQFGKRLWICPSWREIPEPDAVNVMLDPGLAFGTGTHPTTSLCLEWLEGLDLEGKTVVDFGCGSGILAIAAIKLGAAKVIGIDIDPQAILASKDNATRNGVADQIELYLPQDQPEGLIADVVVANILAGPLRELSGIITSLVKPQGQLAMSGVLDTQAEDVASYYAEQFDLDAIVEQQEWCRISGKKK</sequence>
<protein>
    <recommendedName>
        <fullName evidence="1">Ribosomal protein L11 methyltransferase</fullName>
        <shortName evidence="1">L11 Mtase</shortName>
        <ecNumber evidence="1">2.1.1.-</ecNumber>
    </recommendedName>
</protein>
<proteinExistence type="inferred from homology"/>
<gene>
    <name evidence="1" type="primary">prmA</name>
    <name type="ordered locus">VF_2388</name>
</gene>
<accession>Q5E263</accession>